<protein>
    <recommendedName>
        <fullName>Prolactin-2B1</fullName>
    </recommendedName>
    <alternativeName>
        <fullName>Placental prolactin-like protein K</fullName>
        <shortName>PLP-K</shortName>
        <shortName>PRL-like protein K</shortName>
    </alternativeName>
</protein>
<accession>Q9DAZ2</accession>
<accession>Q2TA52</accession>
<evidence type="ECO:0000250" key="1"/>
<evidence type="ECO:0000255" key="2"/>
<evidence type="ECO:0000269" key="3">
    <source>
    </source>
</evidence>
<evidence type="ECO:0000305" key="4"/>
<feature type="signal peptide" evidence="2">
    <location>
        <begin position="1"/>
        <end position="31"/>
    </location>
</feature>
<feature type="chain" id="PRO_0000045169" description="Prolactin-2B1">
    <location>
        <begin position="32"/>
        <end position="228"/>
    </location>
</feature>
<feature type="disulfide bond" evidence="1">
    <location>
        <begin position="89"/>
        <end position="194"/>
    </location>
</feature>
<feature type="disulfide bond" evidence="1">
    <location>
        <begin position="203"/>
        <end position="228"/>
    </location>
</feature>
<dbReference type="EMBL" id="AF525155">
    <property type="protein sequence ID" value="AAN39703.1"/>
    <property type="molecule type" value="mRNA"/>
</dbReference>
<dbReference type="EMBL" id="AK005411">
    <property type="protein sequence ID" value="BAB24009.1"/>
    <property type="molecule type" value="mRNA"/>
</dbReference>
<dbReference type="EMBL" id="AL592443">
    <property type="status" value="NOT_ANNOTATED_CDS"/>
    <property type="molecule type" value="Genomic_DNA"/>
</dbReference>
<dbReference type="EMBL" id="BC100329">
    <property type="protein sequence ID" value="AAI00330.1"/>
    <property type="molecule type" value="mRNA"/>
</dbReference>
<dbReference type="EMBL" id="BC111112">
    <property type="protein sequence ID" value="AAI11113.1"/>
    <property type="molecule type" value="mRNA"/>
</dbReference>
<dbReference type="CCDS" id="CCDS26397.1"/>
<dbReference type="RefSeq" id="NP_079808.1">
    <property type="nucleotide sequence ID" value="NM_025532.3"/>
</dbReference>
<dbReference type="SMR" id="Q9DAZ2"/>
<dbReference type="FunCoup" id="Q9DAZ2">
    <property type="interactions" value="152"/>
</dbReference>
<dbReference type="STRING" id="10090.ENSMUSP00000100019"/>
<dbReference type="PhosphoSitePlus" id="Q9DAZ2"/>
<dbReference type="PaxDb" id="10090-ENSMUSP00000100019"/>
<dbReference type="DNASU" id="66392"/>
<dbReference type="Ensembl" id="ENSMUST00000102954.10">
    <property type="protein sequence ID" value="ENSMUSP00000100019.4"/>
    <property type="gene ID" value="ENSMUSG00000069258.11"/>
</dbReference>
<dbReference type="GeneID" id="66392"/>
<dbReference type="KEGG" id="mmu:66392"/>
<dbReference type="UCSC" id="uc007pxn.1">
    <property type="organism name" value="mouse"/>
</dbReference>
<dbReference type="AGR" id="MGI:1861444"/>
<dbReference type="CTD" id="66392"/>
<dbReference type="MGI" id="MGI:1861444">
    <property type="gene designation" value="Prl2b1"/>
</dbReference>
<dbReference type="VEuPathDB" id="HostDB:ENSMUSG00000069258"/>
<dbReference type="eggNOG" id="ENOG502QYU3">
    <property type="taxonomic scope" value="Eukaryota"/>
</dbReference>
<dbReference type="GeneTree" id="ENSGT00950000182818"/>
<dbReference type="HOGENOM" id="CLU_088274_0_1_1"/>
<dbReference type="InParanoid" id="Q9DAZ2"/>
<dbReference type="OMA" id="SATNSCH"/>
<dbReference type="OrthoDB" id="9946219at2759"/>
<dbReference type="TreeFam" id="TF332592"/>
<dbReference type="BioGRID-ORCS" id="66392">
    <property type="hits" value="0 hits in 78 CRISPR screens"/>
</dbReference>
<dbReference type="ChiTaRS" id="Prl2b1">
    <property type="organism name" value="mouse"/>
</dbReference>
<dbReference type="PRO" id="PR:Q9DAZ2"/>
<dbReference type="Proteomes" id="UP000000589">
    <property type="component" value="Chromosome 13"/>
</dbReference>
<dbReference type="RNAct" id="Q9DAZ2">
    <property type="molecule type" value="protein"/>
</dbReference>
<dbReference type="Bgee" id="ENSMUSG00000069258">
    <property type="expression patterns" value="Expressed in placenta labyrinth and 27 other cell types or tissues"/>
</dbReference>
<dbReference type="ExpressionAtlas" id="Q9DAZ2">
    <property type="expression patterns" value="baseline and differential"/>
</dbReference>
<dbReference type="GO" id="GO:0005576">
    <property type="term" value="C:extracellular region"/>
    <property type="evidence" value="ECO:0007669"/>
    <property type="project" value="UniProtKB-SubCell"/>
</dbReference>
<dbReference type="GO" id="GO:0005179">
    <property type="term" value="F:hormone activity"/>
    <property type="evidence" value="ECO:0007669"/>
    <property type="project" value="UniProtKB-KW"/>
</dbReference>
<dbReference type="CDD" id="cd10288">
    <property type="entry name" value="prolactin_like"/>
    <property type="match status" value="1"/>
</dbReference>
<dbReference type="FunFam" id="1.20.1250.10:FF:000061">
    <property type="entry name" value="Prolactin-2B1"/>
    <property type="match status" value="1"/>
</dbReference>
<dbReference type="Gene3D" id="1.20.1250.10">
    <property type="match status" value="1"/>
</dbReference>
<dbReference type="InterPro" id="IPR009079">
    <property type="entry name" value="4_helix_cytokine-like_core"/>
</dbReference>
<dbReference type="InterPro" id="IPR001400">
    <property type="entry name" value="Somatotropin/Prolactin"/>
</dbReference>
<dbReference type="PANTHER" id="PTHR11417:SF35">
    <property type="entry name" value="PROLACTIN-2B1"/>
    <property type="match status" value="1"/>
</dbReference>
<dbReference type="PANTHER" id="PTHR11417">
    <property type="entry name" value="SOMATOTROPIN,PROLACTIN"/>
    <property type="match status" value="1"/>
</dbReference>
<dbReference type="Pfam" id="PF00103">
    <property type="entry name" value="Hormone_1"/>
    <property type="match status" value="1"/>
</dbReference>
<dbReference type="PRINTS" id="PR00836">
    <property type="entry name" value="SOMATOTROPIN"/>
</dbReference>
<dbReference type="SUPFAM" id="SSF47266">
    <property type="entry name" value="4-helical cytokines"/>
    <property type="match status" value="1"/>
</dbReference>
<name>PR2B1_MOUSE</name>
<reference key="1">
    <citation type="journal article" date="2003" name="Endocrinology">
        <title>The mouse prolactin gene family locus.</title>
        <authorList>
            <person name="Wiemers D.O."/>
            <person name="Shao L.-J."/>
            <person name="Ain R."/>
            <person name="Dai G."/>
            <person name="Soares M.J."/>
        </authorList>
    </citation>
    <scope>NUCLEOTIDE SEQUENCE [MRNA]</scope>
    <scope>TISSUE SPECIFICITY</scope>
    <source>
        <strain>C57BL/6J</strain>
    </source>
</reference>
<reference key="2">
    <citation type="journal article" date="2005" name="Science">
        <title>The transcriptional landscape of the mammalian genome.</title>
        <authorList>
            <person name="Carninci P."/>
            <person name="Kasukawa T."/>
            <person name="Katayama S."/>
            <person name="Gough J."/>
            <person name="Frith M.C."/>
            <person name="Maeda N."/>
            <person name="Oyama R."/>
            <person name="Ravasi T."/>
            <person name="Lenhard B."/>
            <person name="Wells C."/>
            <person name="Kodzius R."/>
            <person name="Shimokawa K."/>
            <person name="Bajic V.B."/>
            <person name="Brenner S.E."/>
            <person name="Batalov S."/>
            <person name="Forrest A.R."/>
            <person name="Zavolan M."/>
            <person name="Davis M.J."/>
            <person name="Wilming L.G."/>
            <person name="Aidinis V."/>
            <person name="Allen J.E."/>
            <person name="Ambesi-Impiombato A."/>
            <person name="Apweiler R."/>
            <person name="Aturaliya R.N."/>
            <person name="Bailey T.L."/>
            <person name="Bansal M."/>
            <person name="Baxter L."/>
            <person name="Beisel K.W."/>
            <person name="Bersano T."/>
            <person name="Bono H."/>
            <person name="Chalk A.M."/>
            <person name="Chiu K.P."/>
            <person name="Choudhary V."/>
            <person name="Christoffels A."/>
            <person name="Clutterbuck D.R."/>
            <person name="Crowe M.L."/>
            <person name="Dalla E."/>
            <person name="Dalrymple B.P."/>
            <person name="de Bono B."/>
            <person name="Della Gatta G."/>
            <person name="di Bernardo D."/>
            <person name="Down T."/>
            <person name="Engstrom P."/>
            <person name="Fagiolini M."/>
            <person name="Faulkner G."/>
            <person name="Fletcher C.F."/>
            <person name="Fukushima T."/>
            <person name="Furuno M."/>
            <person name="Futaki S."/>
            <person name="Gariboldi M."/>
            <person name="Georgii-Hemming P."/>
            <person name="Gingeras T.R."/>
            <person name="Gojobori T."/>
            <person name="Green R.E."/>
            <person name="Gustincich S."/>
            <person name="Harbers M."/>
            <person name="Hayashi Y."/>
            <person name="Hensch T.K."/>
            <person name="Hirokawa N."/>
            <person name="Hill D."/>
            <person name="Huminiecki L."/>
            <person name="Iacono M."/>
            <person name="Ikeo K."/>
            <person name="Iwama A."/>
            <person name="Ishikawa T."/>
            <person name="Jakt M."/>
            <person name="Kanapin A."/>
            <person name="Katoh M."/>
            <person name="Kawasawa Y."/>
            <person name="Kelso J."/>
            <person name="Kitamura H."/>
            <person name="Kitano H."/>
            <person name="Kollias G."/>
            <person name="Krishnan S.P."/>
            <person name="Kruger A."/>
            <person name="Kummerfeld S.K."/>
            <person name="Kurochkin I.V."/>
            <person name="Lareau L.F."/>
            <person name="Lazarevic D."/>
            <person name="Lipovich L."/>
            <person name="Liu J."/>
            <person name="Liuni S."/>
            <person name="McWilliam S."/>
            <person name="Madan Babu M."/>
            <person name="Madera M."/>
            <person name="Marchionni L."/>
            <person name="Matsuda H."/>
            <person name="Matsuzawa S."/>
            <person name="Miki H."/>
            <person name="Mignone F."/>
            <person name="Miyake S."/>
            <person name="Morris K."/>
            <person name="Mottagui-Tabar S."/>
            <person name="Mulder N."/>
            <person name="Nakano N."/>
            <person name="Nakauchi H."/>
            <person name="Ng P."/>
            <person name="Nilsson R."/>
            <person name="Nishiguchi S."/>
            <person name="Nishikawa S."/>
            <person name="Nori F."/>
            <person name="Ohara O."/>
            <person name="Okazaki Y."/>
            <person name="Orlando V."/>
            <person name="Pang K.C."/>
            <person name="Pavan W.J."/>
            <person name="Pavesi G."/>
            <person name="Pesole G."/>
            <person name="Petrovsky N."/>
            <person name="Piazza S."/>
            <person name="Reed J."/>
            <person name="Reid J.F."/>
            <person name="Ring B.Z."/>
            <person name="Ringwald M."/>
            <person name="Rost B."/>
            <person name="Ruan Y."/>
            <person name="Salzberg S.L."/>
            <person name="Sandelin A."/>
            <person name="Schneider C."/>
            <person name="Schoenbach C."/>
            <person name="Sekiguchi K."/>
            <person name="Semple C.A."/>
            <person name="Seno S."/>
            <person name="Sessa L."/>
            <person name="Sheng Y."/>
            <person name="Shibata Y."/>
            <person name="Shimada H."/>
            <person name="Shimada K."/>
            <person name="Silva D."/>
            <person name="Sinclair B."/>
            <person name="Sperling S."/>
            <person name="Stupka E."/>
            <person name="Sugiura K."/>
            <person name="Sultana R."/>
            <person name="Takenaka Y."/>
            <person name="Taki K."/>
            <person name="Tammoja K."/>
            <person name="Tan S.L."/>
            <person name="Tang S."/>
            <person name="Taylor M.S."/>
            <person name="Tegner J."/>
            <person name="Teichmann S.A."/>
            <person name="Ueda H.R."/>
            <person name="van Nimwegen E."/>
            <person name="Verardo R."/>
            <person name="Wei C.L."/>
            <person name="Yagi K."/>
            <person name="Yamanishi H."/>
            <person name="Zabarovsky E."/>
            <person name="Zhu S."/>
            <person name="Zimmer A."/>
            <person name="Hide W."/>
            <person name="Bult C."/>
            <person name="Grimmond S.M."/>
            <person name="Teasdale R.D."/>
            <person name="Liu E.T."/>
            <person name="Brusic V."/>
            <person name="Quackenbush J."/>
            <person name="Wahlestedt C."/>
            <person name="Mattick J.S."/>
            <person name="Hume D.A."/>
            <person name="Kai C."/>
            <person name="Sasaki D."/>
            <person name="Tomaru Y."/>
            <person name="Fukuda S."/>
            <person name="Kanamori-Katayama M."/>
            <person name="Suzuki M."/>
            <person name="Aoki J."/>
            <person name="Arakawa T."/>
            <person name="Iida J."/>
            <person name="Imamura K."/>
            <person name="Itoh M."/>
            <person name="Kato T."/>
            <person name="Kawaji H."/>
            <person name="Kawagashira N."/>
            <person name="Kawashima T."/>
            <person name="Kojima M."/>
            <person name="Kondo S."/>
            <person name="Konno H."/>
            <person name="Nakano K."/>
            <person name="Ninomiya N."/>
            <person name="Nishio T."/>
            <person name="Okada M."/>
            <person name="Plessy C."/>
            <person name="Shibata K."/>
            <person name="Shiraki T."/>
            <person name="Suzuki S."/>
            <person name="Tagami M."/>
            <person name="Waki K."/>
            <person name="Watahiki A."/>
            <person name="Okamura-Oho Y."/>
            <person name="Suzuki H."/>
            <person name="Kawai J."/>
            <person name="Hayashizaki Y."/>
        </authorList>
    </citation>
    <scope>NUCLEOTIDE SEQUENCE [LARGE SCALE MRNA]</scope>
    <source>
        <strain>C57BL/6J</strain>
        <tissue>Placenta</tissue>
    </source>
</reference>
<reference key="3">
    <citation type="journal article" date="2009" name="PLoS Biol.">
        <title>Lineage-specific biology revealed by a finished genome assembly of the mouse.</title>
        <authorList>
            <person name="Church D.M."/>
            <person name="Goodstadt L."/>
            <person name="Hillier L.W."/>
            <person name="Zody M.C."/>
            <person name="Goldstein S."/>
            <person name="She X."/>
            <person name="Bult C.J."/>
            <person name="Agarwala R."/>
            <person name="Cherry J.L."/>
            <person name="DiCuccio M."/>
            <person name="Hlavina W."/>
            <person name="Kapustin Y."/>
            <person name="Meric P."/>
            <person name="Maglott D."/>
            <person name="Birtle Z."/>
            <person name="Marques A.C."/>
            <person name="Graves T."/>
            <person name="Zhou S."/>
            <person name="Teague B."/>
            <person name="Potamousis K."/>
            <person name="Churas C."/>
            <person name="Place M."/>
            <person name="Herschleb J."/>
            <person name="Runnheim R."/>
            <person name="Forrest D."/>
            <person name="Amos-Landgraf J."/>
            <person name="Schwartz D.C."/>
            <person name="Cheng Z."/>
            <person name="Lindblad-Toh K."/>
            <person name="Eichler E.E."/>
            <person name="Ponting C.P."/>
        </authorList>
    </citation>
    <scope>NUCLEOTIDE SEQUENCE [LARGE SCALE GENOMIC DNA]</scope>
    <source>
        <strain>C57BL/6J</strain>
    </source>
</reference>
<reference key="4">
    <citation type="journal article" date="2004" name="Genome Res.">
        <title>The status, quality, and expansion of the NIH full-length cDNA project: the Mammalian Gene Collection (MGC).</title>
        <authorList>
            <consortium name="The MGC Project Team"/>
        </authorList>
    </citation>
    <scope>NUCLEOTIDE SEQUENCE [LARGE SCALE MRNA]</scope>
    <source>
        <tissue>Placenta</tissue>
    </source>
</reference>
<organism>
    <name type="scientific">Mus musculus</name>
    <name type="common">Mouse</name>
    <dbReference type="NCBI Taxonomy" id="10090"/>
    <lineage>
        <taxon>Eukaryota</taxon>
        <taxon>Metazoa</taxon>
        <taxon>Chordata</taxon>
        <taxon>Craniata</taxon>
        <taxon>Vertebrata</taxon>
        <taxon>Euteleostomi</taxon>
        <taxon>Mammalia</taxon>
        <taxon>Eutheria</taxon>
        <taxon>Euarchontoglires</taxon>
        <taxon>Glires</taxon>
        <taxon>Rodentia</taxon>
        <taxon>Myomorpha</taxon>
        <taxon>Muroidea</taxon>
        <taxon>Muridae</taxon>
        <taxon>Murinae</taxon>
        <taxon>Mus</taxon>
        <taxon>Mus</taxon>
    </lineage>
</organism>
<sequence length="228" mass="25879">MLLSLTQMLSSRASSRLFLVSYLLLWENVVSTSTCAEKDATIQDSLEKLLTLTTFMSQVVSSETAKLFTEFNNQYAQGKRYNDRIPGTCHTEFFDTPVNKEQSLVRTPETLLTLVHSLLNSWTNALNHLVNEMSTMQGDTSSLISKAREIQAKFDELTTGVKIVQSMIGERDIATYSAWSGLASLQSSNEDVRCFSFYTMIRCLLRDSRKVNTYLEVIKYKMVDQNNC</sequence>
<comment type="subcellular location">
    <subcellularLocation>
        <location evidence="1">Secreted</location>
    </subcellularLocation>
</comment>
<comment type="tissue specificity">
    <text evidence="3">Expressed specifically in placenta. Expressed at high levels in trophoblast cells from both junctional and labyrinth zones of the chorioallantoic placenta the last week of gestation.</text>
</comment>
<comment type="similarity">
    <text evidence="4">Belongs to the somatotropin/prolactin family.</text>
</comment>
<proteinExistence type="evidence at transcript level"/>
<gene>
    <name type="primary">Prl2b1</name>
    <name type="synonym">Prlpk</name>
</gene>
<keyword id="KW-1015">Disulfide bond</keyword>
<keyword id="KW-0372">Hormone</keyword>
<keyword id="KW-1185">Reference proteome</keyword>
<keyword id="KW-0964">Secreted</keyword>
<keyword id="KW-0732">Signal</keyword>